<name>HSLO_BACLD</name>
<organism>
    <name type="scientific">Bacillus licheniformis (strain ATCC 14580 / DSM 13 / JCM 2505 / CCUG 7422 / NBRC 12200 / NCIMB 9375 / NCTC 10341 / NRRL NRS-1264 / Gibson 46)</name>
    <dbReference type="NCBI Taxonomy" id="279010"/>
    <lineage>
        <taxon>Bacteria</taxon>
        <taxon>Bacillati</taxon>
        <taxon>Bacillota</taxon>
        <taxon>Bacilli</taxon>
        <taxon>Bacillales</taxon>
        <taxon>Bacillaceae</taxon>
        <taxon>Bacillus</taxon>
    </lineage>
</organism>
<proteinExistence type="inferred from homology"/>
<comment type="function">
    <text evidence="1">Redox regulated molecular chaperone. Protects both thermally unfolding and oxidatively damaged proteins from irreversible aggregation. Plays an important role in the bacterial defense system toward oxidative stress.</text>
</comment>
<comment type="subcellular location">
    <subcellularLocation>
        <location evidence="1">Cytoplasm</location>
    </subcellularLocation>
</comment>
<comment type="PTM">
    <text evidence="1">Under oxidizing conditions two disulfide bonds are formed involving the reactive cysteines. Under reducing conditions zinc is bound to the reactive cysteines and the protein is inactive.</text>
</comment>
<comment type="similarity">
    <text evidence="1">Belongs to the HSP33 family.</text>
</comment>
<keyword id="KW-0143">Chaperone</keyword>
<keyword id="KW-0963">Cytoplasm</keyword>
<keyword id="KW-1015">Disulfide bond</keyword>
<keyword id="KW-0676">Redox-active center</keyword>
<keyword id="KW-1185">Reference proteome</keyword>
<keyword id="KW-0862">Zinc</keyword>
<gene>
    <name evidence="1" type="primary">hslO</name>
    <name type="ordered locus">BLi00087</name>
    <name type="ordered locus">BL00854</name>
</gene>
<feature type="chain" id="PRO_0000238061" description="33 kDa chaperonin">
    <location>
        <begin position="1"/>
        <end position="289"/>
    </location>
</feature>
<feature type="disulfide bond" description="Redox-active" evidence="1">
    <location>
        <begin position="235"/>
        <end position="237"/>
    </location>
</feature>
<feature type="disulfide bond" description="Redox-active" evidence="1">
    <location>
        <begin position="268"/>
        <end position="271"/>
    </location>
</feature>
<reference key="1">
    <citation type="journal article" date="2004" name="J. Mol. Microbiol. Biotechnol.">
        <title>The complete genome sequence of Bacillus licheniformis DSM13, an organism with great industrial potential.</title>
        <authorList>
            <person name="Veith B."/>
            <person name="Herzberg C."/>
            <person name="Steckel S."/>
            <person name="Feesche J."/>
            <person name="Maurer K.H."/>
            <person name="Ehrenreich P."/>
            <person name="Baeumer S."/>
            <person name="Henne A."/>
            <person name="Liesegang H."/>
            <person name="Merkl R."/>
            <person name="Ehrenreich A."/>
            <person name="Gottschalk G."/>
        </authorList>
    </citation>
    <scope>NUCLEOTIDE SEQUENCE [LARGE SCALE GENOMIC DNA]</scope>
    <source>
        <strain>ATCC 14580 / DSM 13 / JCM 2505 / CCUG 7422 / NBRC 12200 / NCIMB 9375 / NCTC 10341 / NRRL NRS-1264 / Gibson 46</strain>
    </source>
</reference>
<reference key="2">
    <citation type="journal article" date="2004" name="Genome Biol.">
        <title>Complete genome sequence of the industrial bacterium Bacillus licheniformis and comparisons with closely related Bacillus species.</title>
        <authorList>
            <person name="Rey M.W."/>
            <person name="Ramaiya P."/>
            <person name="Nelson B.A."/>
            <person name="Brody-Karpin S.D."/>
            <person name="Zaretsky E.J."/>
            <person name="Tang M."/>
            <person name="Lopez de Leon A."/>
            <person name="Xiang H."/>
            <person name="Gusti V."/>
            <person name="Clausen I.G."/>
            <person name="Olsen P.B."/>
            <person name="Rasmussen M.D."/>
            <person name="Andersen J.T."/>
            <person name="Joergensen P.L."/>
            <person name="Larsen T.S."/>
            <person name="Sorokin A."/>
            <person name="Bolotin A."/>
            <person name="Lapidus A."/>
            <person name="Galleron N."/>
            <person name="Ehrlich S.D."/>
            <person name="Berka R.M."/>
        </authorList>
    </citation>
    <scope>NUCLEOTIDE SEQUENCE [LARGE SCALE GENOMIC DNA]</scope>
    <source>
        <strain>ATCC 14580 / DSM 13 / JCM 2505 / CCUG 7422 / NBRC 12200 / NCIMB 9375 / NCTC 10341 / NRRL NRS-1264 / Gibson 46</strain>
    </source>
</reference>
<protein>
    <recommendedName>
        <fullName evidence="1">33 kDa chaperonin</fullName>
    </recommendedName>
    <alternativeName>
        <fullName evidence="1">Heat shock protein 33 homolog</fullName>
        <shortName evidence="1">HSP33</shortName>
    </alternativeName>
</protein>
<dbReference type="EMBL" id="AE017333">
    <property type="protein sequence ID" value="AAU39064.1"/>
    <property type="molecule type" value="Genomic_DNA"/>
</dbReference>
<dbReference type="EMBL" id="CP000002">
    <property type="protein sequence ID" value="AAU21719.1"/>
    <property type="molecule type" value="Genomic_DNA"/>
</dbReference>
<dbReference type="RefSeq" id="WP_003178244.1">
    <property type="nucleotide sequence ID" value="NC_006322.1"/>
</dbReference>
<dbReference type="SMR" id="Q65PF0"/>
<dbReference type="STRING" id="279010.BL00854"/>
<dbReference type="GeneID" id="92858962"/>
<dbReference type="KEGG" id="bld:BLi00087"/>
<dbReference type="KEGG" id="bli:BL00854"/>
<dbReference type="PATRIC" id="fig|279010.13.peg.77"/>
<dbReference type="eggNOG" id="COG1281">
    <property type="taxonomic scope" value="Bacteria"/>
</dbReference>
<dbReference type="HOGENOM" id="CLU_054493_1_0_9"/>
<dbReference type="Proteomes" id="UP000000606">
    <property type="component" value="Chromosome"/>
</dbReference>
<dbReference type="GO" id="GO:0005737">
    <property type="term" value="C:cytoplasm"/>
    <property type="evidence" value="ECO:0007669"/>
    <property type="project" value="UniProtKB-SubCell"/>
</dbReference>
<dbReference type="GO" id="GO:0044183">
    <property type="term" value="F:protein folding chaperone"/>
    <property type="evidence" value="ECO:0007669"/>
    <property type="project" value="TreeGrafter"/>
</dbReference>
<dbReference type="GO" id="GO:0051082">
    <property type="term" value="F:unfolded protein binding"/>
    <property type="evidence" value="ECO:0007669"/>
    <property type="project" value="UniProtKB-UniRule"/>
</dbReference>
<dbReference type="GO" id="GO:0042026">
    <property type="term" value="P:protein refolding"/>
    <property type="evidence" value="ECO:0007669"/>
    <property type="project" value="TreeGrafter"/>
</dbReference>
<dbReference type="CDD" id="cd00498">
    <property type="entry name" value="Hsp33"/>
    <property type="match status" value="1"/>
</dbReference>
<dbReference type="Gene3D" id="3.55.30.10">
    <property type="entry name" value="Hsp33 domain"/>
    <property type="match status" value="1"/>
</dbReference>
<dbReference type="Gene3D" id="3.90.1280.10">
    <property type="entry name" value="HSP33 redox switch-like"/>
    <property type="match status" value="1"/>
</dbReference>
<dbReference type="HAMAP" id="MF_00117">
    <property type="entry name" value="HslO"/>
    <property type="match status" value="1"/>
</dbReference>
<dbReference type="InterPro" id="IPR000397">
    <property type="entry name" value="Heat_shock_Hsp33"/>
</dbReference>
<dbReference type="InterPro" id="IPR016154">
    <property type="entry name" value="Heat_shock_Hsp33_C"/>
</dbReference>
<dbReference type="InterPro" id="IPR016153">
    <property type="entry name" value="Heat_shock_Hsp33_N"/>
</dbReference>
<dbReference type="NCBIfam" id="NF001033">
    <property type="entry name" value="PRK00114.1"/>
    <property type="match status" value="1"/>
</dbReference>
<dbReference type="PANTHER" id="PTHR30111">
    <property type="entry name" value="33 KDA CHAPERONIN"/>
    <property type="match status" value="1"/>
</dbReference>
<dbReference type="PANTHER" id="PTHR30111:SF1">
    <property type="entry name" value="33 KDA CHAPERONIN"/>
    <property type="match status" value="1"/>
</dbReference>
<dbReference type="Pfam" id="PF01430">
    <property type="entry name" value="HSP33"/>
    <property type="match status" value="1"/>
</dbReference>
<dbReference type="PIRSF" id="PIRSF005261">
    <property type="entry name" value="Heat_shock_Hsp33"/>
    <property type="match status" value="1"/>
</dbReference>
<dbReference type="SUPFAM" id="SSF64397">
    <property type="entry name" value="Hsp33 domain"/>
    <property type="match status" value="1"/>
</dbReference>
<dbReference type="SUPFAM" id="SSF118352">
    <property type="entry name" value="HSP33 redox switch-like"/>
    <property type="match status" value="1"/>
</dbReference>
<accession>Q65PF0</accession>
<accession>Q62ZT9</accession>
<evidence type="ECO:0000255" key="1">
    <source>
        <dbReference type="HAMAP-Rule" id="MF_00117"/>
    </source>
</evidence>
<sequence length="289" mass="31219">MDYLVKAIAYDGKVRAYAANTTETIHEAQRRHNTWPTASAALGRTMTAAVMLGAMLKGEDKLTVKIEGGGPIGAIVADGNAKGDVRGYVSNPHVHFDLNEHGKLDVRRAVGTSGTLSVVKDLGLRDLFTGQVEIVSGEIGEDFTYYLVSSEQVPSSVGVGVLVNPDNTILAAGGFILQLLPGTDDETITKLETNLSQVEPISKLIQKGLTPEEVLAAVLGEEPEVLETVPVRFTCNCSKERFARGIIGLGKDEIQQMIDEDGQAEAQCHFCNETYLFTKEELEALRDEI</sequence>